<organism>
    <name type="scientific">Aspergillus niger (strain ATCC MYA-4892 / CBS 513.88 / FGSC A1513)</name>
    <dbReference type="NCBI Taxonomy" id="425011"/>
    <lineage>
        <taxon>Eukaryota</taxon>
        <taxon>Fungi</taxon>
        <taxon>Dikarya</taxon>
        <taxon>Ascomycota</taxon>
        <taxon>Pezizomycotina</taxon>
        <taxon>Eurotiomycetes</taxon>
        <taxon>Eurotiomycetidae</taxon>
        <taxon>Eurotiales</taxon>
        <taxon>Aspergillaceae</taxon>
        <taxon>Aspergillus</taxon>
        <taxon>Aspergillus subgen. Circumdati</taxon>
    </lineage>
</organism>
<proteinExistence type="inferred from homology"/>
<protein>
    <recommendedName>
        <fullName>Type 1 phosphatases regulator ypi1</fullName>
    </recommendedName>
</protein>
<name>YPI1_ASPNC</name>
<accession>A2QPT2</accession>
<gene>
    <name type="primary">ypi1</name>
    <name type="ORF">An08g00080</name>
</gene>
<feature type="chain" id="PRO_0000333468" description="Type 1 phosphatases regulator ypi1">
    <location>
        <begin position="1"/>
        <end position="175"/>
    </location>
</feature>
<feature type="region of interest" description="Disordered" evidence="2">
    <location>
        <begin position="1"/>
        <end position="175"/>
    </location>
</feature>
<feature type="compositionally biased region" description="Low complexity" evidence="2">
    <location>
        <begin position="90"/>
        <end position="106"/>
    </location>
</feature>
<feature type="compositionally biased region" description="Polar residues" evidence="2">
    <location>
        <begin position="127"/>
        <end position="141"/>
    </location>
</feature>
<feature type="compositionally biased region" description="Basic residues" evidence="2">
    <location>
        <begin position="148"/>
        <end position="160"/>
    </location>
</feature>
<reference key="1">
    <citation type="journal article" date="2007" name="Nat. Biotechnol.">
        <title>Genome sequencing and analysis of the versatile cell factory Aspergillus niger CBS 513.88.</title>
        <authorList>
            <person name="Pel H.J."/>
            <person name="de Winde J.H."/>
            <person name="Archer D.B."/>
            <person name="Dyer P.S."/>
            <person name="Hofmann G."/>
            <person name="Schaap P.J."/>
            <person name="Turner G."/>
            <person name="de Vries R.P."/>
            <person name="Albang R."/>
            <person name="Albermann K."/>
            <person name="Andersen M.R."/>
            <person name="Bendtsen J.D."/>
            <person name="Benen J.A.E."/>
            <person name="van den Berg M."/>
            <person name="Breestraat S."/>
            <person name="Caddick M.X."/>
            <person name="Contreras R."/>
            <person name="Cornell M."/>
            <person name="Coutinho P.M."/>
            <person name="Danchin E.G.J."/>
            <person name="Debets A.J.M."/>
            <person name="Dekker P."/>
            <person name="van Dijck P.W.M."/>
            <person name="van Dijk A."/>
            <person name="Dijkhuizen L."/>
            <person name="Driessen A.J.M."/>
            <person name="d'Enfert C."/>
            <person name="Geysens S."/>
            <person name="Goosen C."/>
            <person name="Groot G.S.P."/>
            <person name="de Groot P.W.J."/>
            <person name="Guillemette T."/>
            <person name="Henrissat B."/>
            <person name="Herweijer M."/>
            <person name="van den Hombergh J.P.T.W."/>
            <person name="van den Hondel C.A.M.J.J."/>
            <person name="van der Heijden R.T.J.M."/>
            <person name="van der Kaaij R.M."/>
            <person name="Klis F.M."/>
            <person name="Kools H.J."/>
            <person name="Kubicek C.P."/>
            <person name="van Kuyk P.A."/>
            <person name="Lauber J."/>
            <person name="Lu X."/>
            <person name="van der Maarel M.J.E.C."/>
            <person name="Meulenberg R."/>
            <person name="Menke H."/>
            <person name="Mortimer M.A."/>
            <person name="Nielsen J."/>
            <person name="Oliver S.G."/>
            <person name="Olsthoorn M."/>
            <person name="Pal K."/>
            <person name="van Peij N.N.M.E."/>
            <person name="Ram A.F.J."/>
            <person name="Rinas U."/>
            <person name="Roubos J.A."/>
            <person name="Sagt C.M.J."/>
            <person name="Schmoll M."/>
            <person name="Sun J."/>
            <person name="Ussery D."/>
            <person name="Varga J."/>
            <person name="Vervecken W."/>
            <person name="van de Vondervoort P.J.J."/>
            <person name="Wedler H."/>
            <person name="Woesten H.A.B."/>
            <person name="Zeng A.-P."/>
            <person name="van Ooyen A.J.J."/>
            <person name="Visser J."/>
            <person name="Stam H."/>
        </authorList>
    </citation>
    <scope>NUCLEOTIDE SEQUENCE [LARGE SCALE GENOMIC DNA]</scope>
    <source>
        <strain>ATCC MYA-4892 / CBS 513.88 / FGSC A1513</strain>
    </source>
</reference>
<sequence>MSRTRQIPSEPASSSQLELTEEHTETSSAVPVPATLRLRGADEPAANRLELNEGNSRRIRWSEDVIDNEGMGKKSSKVCCIYHKSRPIGDSSSESESSDSSTSNSDTDSDDEAACHRRTGHRPPTAQGENYASSGQRLSSNSEERTCRSSHRARKTKRKPSPNAYEKMPKTTKGR</sequence>
<keyword id="KW-0539">Nucleus</keyword>
<keyword id="KW-1185">Reference proteome</keyword>
<comment type="function">
    <text evidence="1">Regulator of type 1 phosphatases which maintains protein phosphatase activity under strict control.</text>
</comment>
<comment type="subcellular location">
    <subcellularLocation>
        <location evidence="1">Nucleus</location>
    </subcellularLocation>
</comment>
<comment type="similarity">
    <text evidence="3">Belongs to the YPI1 family.</text>
</comment>
<dbReference type="EMBL" id="AM270156">
    <property type="protein sequence ID" value="CAK39767.1"/>
    <property type="molecule type" value="Genomic_DNA"/>
</dbReference>
<dbReference type="RefSeq" id="XP_001392128.1">
    <property type="nucleotide sequence ID" value="XM_001392091.2"/>
</dbReference>
<dbReference type="SMR" id="A2QPT2"/>
<dbReference type="EnsemblFungi" id="CAK39767">
    <property type="protein sequence ID" value="CAK39767"/>
    <property type="gene ID" value="An08g00080"/>
</dbReference>
<dbReference type="GeneID" id="4982350"/>
<dbReference type="KEGG" id="ang:An08g00080"/>
<dbReference type="VEuPathDB" id="FungiDB:An08g00080"/>
<dbReference type="HOGENOM" id="CLU_098333_0_0_1"/>
<dbReference type="Proteomes" id="UP000006706">
    <property type="component" value="Chromosome 8R"/>
</dbReference>
<dbReference type="GO" id="GO:0005634">
    <property type="term" value="C:nucleus"/>
    <property type="evidence" value="ECO:0007669"/>
    <property type="project" value="UniProtKB-SubCell"/>
</dbReference>
<dbReference type="GO" id="GO:0008157">
    <property type="term" value="F:protein phosphatase 1 binding"/>
    <property type="evidence" value="ECO:0007669"/>
    <property type="project" value="TreeGrafter"/>
</dbReference>
<dbReference type="GO" id="GO:0004865">
    <property type="term" value="F:protein serine/threonine phosphatase inhibitor activity"/>
    <property type="evidence" value="ECO:0007669"/>
    <property type="project" value="InterPro"/>
</dbReference>
<dbReference type="InterPro" id="IPR011107">
    <property type="entry name" value="PPI_Ypi1"/>
</dbReference>
<dbReference type="PANTHER" id="PTHR20835:SF0">
    <property type="entry name" value="E3 UBIQUITIN-PROTEIN LIGASE PPP1R11"/>
    <property type="match status" value="1"/>
</dbReference>
<dbReference type="PANTHER" id="PTHR20835">
    <property type="entry name" value="E3 UBIQUITIN-PROTEIN LIGASE PPP1R11-RELATED"/>
    <property type="match status" value="1"/>
</dbReference>
<dbReference type="Pfam" id="PF07491">
    <property type="entry name" value="PPI_Ypi1"/>
    <property type="match status" value="1"/>
</dbReference>
<evidence type="ECO:0000250" key="1"/>
<evidence type="ECO:0000256" key="2">
    <source>
        <dbReference type="SAM" id="MobiDB-lite"/>
    </source>
</evidence>
<evidence type="ECO:0000305" key="3"/>